<reference key="1">
    <citation type="journal article" date="2008" name="PLoS Genet.">
        <title>Genomic islands in the pathogenic filamentous fungus Aspergillus fumigatus.</title>
        <authorList>
            <person name="Fedorova N.D."/>
            <person name="Khaldi N."/>
            <person name="Joardar V.S."/>
            <person name="Maiti R."/>
            <person name="Amedeo P."/>
            <person name="Anderson M.J."/>
            <person name="Crabtree J."/>
            <person name="Silva J.C."/>
            <person name="Badger J.H."/>
            <person name="Albarraq A."/>
            <person name="Angiuoli S."/>
            <person name="Bussey H."/>
            <person name="Bowyer P."/>
            <person name="Cotty P.J."/>
            <person name="Dyer P.S."/>
            <person name="Egan A."/>
            <person name="Galens K."/>
            <person name="Fraser-Liggett C.M."/>
            <person name="Haas B.J."/>
            <person name="Inman J.M."/>
            <person name="Kent R."/>
            <person name="Lemieux S."/>
            <person name="Malavazi I."/>
            <person name="Orvis J."/>
            <person name="Roemer T."/>
            <person name="Ronning C.M."/>
            <person name="Sundaram J.P."/>
            <person name="Sutton G."/>
            <person name="Turner G."/>
            <person name="Venter J.C."/>
            <person name="White O.R."/>
            <person name="Whitty B.R."/>
            <person name="Youngman P."/>
            <person name="Wolfe K.H."/>
            <person name="Goldman G.H."/>
            <person name="Wortman J.R."/>
            <person name="Jiang B."/>
            <person name="Denning D.W."/>
            <person name="Nierman W.C."/>
        </authorList>
    </citation>
    <scope>NUCLEOTIDE SEQUENCE [LARGE SCALE GENOMIC DNA]</scope>
    <source>
        <strain>ATCC 1007 / CBS 513.65 / DSM 816 / NCTC 3887 / NRRL 1 / QM 1276 / 107</strain>
    </source>
</reference>
<organism>
    <name type="scientific">Aspergillus clavatus (strain ATCC 1007 / CBS 513.65 / DSM 816 / NCTC 3887 / NRRL 1 / QM 1276 / 107)</name>
    <dbReference type="NCBI Taxonomy" id="344612"/>
    <lineage>
        <taxon>Eukaryota</taxon>
        <taxon>Fungi</taxon>
        <taxon>Dikarya</taxon>
        <taxon>Ascomycota</taxon>
        <taxon>Pezizomycotina</taxon>
        <taxon>Eurotiomycetes</taxon>
        <taxon>Eurotiomycetidae</taxon>
        <taxon>Eurotiales</taxon>
        <taxon>Aspergillaceae</taxon>
        <taxon>Aspergillus</taxon>
        <taxon>Aspergillus subgen. Fumigati</taxon>
    </lineage>
</organism>
<proteinExistence type="inferred from homology"/>
<feature type="chain" id="PRO_0000317817" description="Autophagy-related protein 3">
    <location>
        <begin position="1"/>
        <end position="358"/>
    </location>
</feature>
<feature type="region of interest" description="Flexible region" evidence="1">
    <location>
        <begin position="85"/>
        <end position="176"/>
    </location>
</feature>
<feature type="region of interest" description="Disordered" evidence="2">
    <location>
        <begin position="112"/>
        <end position="161"/>
    </location>
</feature>
<feature type="region of interest" description="Handle region" evidence="1">
    <location>
        <begin position="251"/>
        <end position="334"/>
    </location>
</feature>
<feature type="compositionally biased region" description="Basic and acidic residues" evidence="2">
    <location>
        <begin position="117"/>
        <end position="133"/>
    </location>
</feature>
<feature type="compositionally biased region" description="Acidic residues" evidence="2">
    <location>
        <begin position="142"/>
        <end position="161"/>
    </location>
</feature>
<feature type="active site" description="Glycyl thioester intermediate" evidence="1">
    <location>
        <position position="247"/>
    </location>
</feature>
<protein>
    <recommendedName>
        <fullName>Autophagy-related protein 3</fullName>
    </recommendedName>
    <alternativeName>
        <fullName>Autophagy-related E2-like conjugation enzyme atg3</fullName>
    </alternativeName>
</protein>
<sequence length="358" mass="39908">MNILHSTLSTWRDRLAPVSRTSTFRTTGQITPEEFVLAGDYLVYKFPSWSWADASSPAKRVSYLPPGKQFLVTRGVPCHRRLNENFAGDAGHEDEIVRDMLAGDDGDGWLRTGGGRDLAEGHADRTGDVRTVDEAGNIGEREEGDDEEEEEIPDMEDEDDDEEAIIREPAGTSSTTQPIRTYNLYITYSNFYRTPRLYLSGYLSPSEPLPPHLMMEDIVGDYKDKTVTLEDFPWFDGGVKMATVHPCRHASVMKTLLDRADAALKIRRDKLKQAHSPAEASRISAERGLEGLVDETRGLSLGEQQQQGGGGSGGDEWEVLQHDEEDQVAIRVDQYLVVFLKFIASVTPGIEHDFTMGV</sequence>
<dbReference type="EMBL" id="DS027049">
    <property type="protein sequence ID" value="EAW12806.1"/>
    <property type="molecule type" value="Genomic_DNA"/>
</dbReference>
<dbReference type="RefSeq" id="XP_001274232.1">
    <property type="nucleotide sequence ID" value="XM_001274231.1"/>
</dbReference>
<dbReference type="SMR" id="A1CAN8"/>
<dbReference type="STRING" id="344612.A1CAN8"/>
<dbReference type="EnsemblFungi" id="EAW12806">
    <property type="protein sequence ID" value="EAW12806"/>
    <property type="gene ID" value="ACLA_012340"/>
</dbReference>
<dbReference type="GeneID" id="4706535"/>
<dbReference type="KEGG" id="act:ACLA_012340"/>
<dbReference type="VEuPathDB" id="FungiDB:ACLA_012340"/>
<dbReference type="eggNOG" id="KOG2981">
    <property type="taxonomic scope" value="Eukaryota"/>
</dbReference>
<dbReference type="HOGENOM" id="CLU_027518_2_0_1"/>
<dbReference type="OMA" id="HCPTWSW"/>
<dbReference type="OrthoDB" id="1584384at2759"/>
<dbReference type="Proteomes" id="UP000006701">
    <property type="component" value="Unassembled WGS sequence"/>
</dbReference>
<dbReference type="GO" id="GO:0005829">
    <property type="term" value="C:cytosol"/>
    <property type="evidence" value="ECO:0007669"/>
    <property type="project" value="EnsemblFungi"/>
</dbReference>
<dbReference type="GO" id="GO:0005739">
    <property type="term" value="C:mitochondrion"/>
    <property type="evidence" value="ECO:0007669"/>
    <property type="project" value="EnsemblFungi"/>
</dbReference>
<dbReference type="GO" id="GO:0061908">
    <property type="term" value="C:phagophore"/>
    <property type="evidence" value="ECO:0007669"/>
    <property type="project" value="EnsemblFungi"/>
</dbReference>
<dbReference type="GO" id="GO:0000407">
    <property type="term" value="C:phagophore assembly site"/>
    <property type="evidence" value="ECO:0007669"/>
    <property type="project" value="EnsemblFungi"/>
</dbReference>
<dbReference type="GO" id="GO:0019776">
    <property type="term" value="F:Atg8-family ligase activity"/>
    <property type="evidence" value="ECO:0007669"/>
    <property type="project" value="EnsemblFungi"/>
</dbReference>
<dbReference type="GO" id="GO:0000045">
    <property type="term" value="P:autophagosome assembly"/>
    <property type="evidence" value="ECO:0007669"/>
    <property type="project" value="EnsemblFungi"/>
</dbReference>
<dbReference type="GO" id="GO:0000422">
    <property type="term" value="P:autophagy of mitochondrion"/>
    <property type="evidence" value="ECO:0007669"/>
    <property type="project" value="EnsemblFungi"/>
</dbReference>
<dbReference type="GO" id="GO:0061723">
    <property type="term" value="P:glycophagy"/>
    <property type="evidence" value="ECO:0007669"/>
    <property type="project" value="TreeGrafter"/>
</dbReference>
<dbReference type="GO" id="GO:0034727">
    <property type="term" value="P:piecemeal microautophagy of the nucleus"/>
    <property type="evidence" value="ECO:0007669"/>
    <property type="project" value="EnsemblFungi"/>
</dbReference>
<dbReference type="GO" id="GO:0006612">
    <property type="term" value="P:protein targeting to membrane"/>
    <property type="evidence" value="ECO:0007669"/>
    <property type="project" value="EnsemblFungi"/>
</dbReference>
<dbReference type="GO" id="GO:0015031">
    <property type="term" value="P:protein transport"/>
    <property type="evidence" value="ECO:0007669"/>
    <property type="project" value="UniProtKB-KW"/>
</dbReference>
<dbReference type="InterPro" id="IPR007135">
    <property type="entry name" value="Atg3/Atg10"/>
</dbReference>
<dbReference type="PANTHER" id="PTHR12866">
    <property type="entry name" value="UBIQUITIN-LIKE-CONJUGATING ENZYME ATG3"/>
    <property type="match status" value="1"/>
</dbReference>
<dbReference type="PANTHER" id="PTHR12866:SF2">
    <property type="entry name" value="UBIQUITIN-LIKE-CONJUGATING ENZYME ATG3"/>
    <property type="match status" value="1"/>
</dbReference>
<dbReference type="Pfam" id="PF03987">
    <property type="entry name" value="Autophagy_act_C"/>
    <property type="match status" value="1"/>
</dbReference>
<comment type="function">
    <text evidence="1">E2 conjugating enzyme required for the cytoplasm to vacuole transport (Cvt) and autophagy. Required for selective autophagic degradation of the nucleus (nucleophagy) as well as for mitophagy which contributes to regulate mitochondrial quantity and quality by eliminating the mitochondria to a basal level to fulfill cellular energy requirements and preventing excess ROS production. Responsible for the E2-like covalent binding of phosphatidylethanolamine to the C-terminal Gly of atg8. The atg12-atg5 conjugate plays a role of an E3 and promotes the transfer of atg8 from atg3 to phosphatidylethanolamine (PE). This step is required for the membrane association of atg8. The formation of the atg8-phosphatidylethanolamine conjugate is essential for autophagy and for the cytoplasm to vacuole transport (Cvt). The atg8-PE conjugate mediates tethering between adjacent membranes and stimulates membrane hemifusion, leading to expansion of the autophagosomal membrane during autophagy (By similarity).</text>
</comment>
<comment type="subunit">
    <text evidence="1">Monomer. Interacts with atg8 through an intermediate thioester bond through the C-terminal Gly of atg8. Also interacts with the 40 amino acid C-terminal region of the E1-like atg7 enzyme. Also interacts with the atg12-atg5 conjugate.</text>
</comment>
<comment type="subcellular location">
    <subcellularLocation>
        <location evidence="1">Cytoplasm</location>
    </subcellularLocation>
</comment>
<comment type="domain">
    <text evidence="1">The N-terminal region is involved in phosphatidylethanolamine-binding and is required for atg8-PE conjugation.</text>
</comment>
<comment type="domain">
    <text evidence="1">The flexible region (FR) is required for atg7-binding.</text>
</comment>
<comment type="domain">
    <text evidence="1">The handle region (HR) contains the atg8 interaction motif (AIM) and mediates binding to atg8. It is crucial for the cytoplasm-to-vacuole targeting pathway (By similarity).</text>
</comment>
<comment type="similarity">
    <text evidence="3">Belongs to the ATG3 family.</text>
</comment>
<accession>A1CAN8</accession>
<evidence type="ECO:0000250" key="1"/>
<evidence type="ECO:0000256" key="2">
    <source>
        <dbReference type="SAM" id="MobiDB-lite"/>
    </source>
</evidence>
<evidence type="ECO:0000305" key="3"/>
<keyword id="KW-0072">Autophagy</keyword>
<keyword id="KW-0963">Cytoplasm</keyword>
<keyword id="KW-0653">Protein transport</keyword>
<keyword id="KW-1185">Reference proteome</keyword>
<keyword id="KW-0813">Transport</keyword>
<keyword id="KW-0833">Ubl conjugation pathway</keyword>
<gene>
    <name type="primary">atg3</name>
    <name type="ORF">ACLA_012340</name>
</gene>
<name>ATG3_ASPCL</name>